<sequence length="350" mass="38926">MSELALRHDWQRDEIEALFALPMNDLLFKAHSIHRQHFDPNEVQISRLLSIKTGACPEDCKYCPQSARYDTGLEKERLIEIEKVLTEARAAKAAGASRFCMGAAWRNPHERDMPYLKDMVSEVKAMGMETCMTLGMLSESQAKDLADAGLDYYNHNLDTSPEYYGDIITTRTYQDRLNTLDNVRAAGMKVCSGGIVGMGEQASDRAGLLQQLANMAKHPESVPINMLVKVAGTPFENLDDLDPLEFVRTIAVARIVMPLSRVRLSAGREKMTDELQAMCFFAGANSIFYGCKLLTTSNPEENEDMTLFKRLGLHPEQGKAGTVEEDKAVFAKAQAVKDKASQPFYDAAAL</sequence>
<comment type="function">
    <text evidence="1">Catalyzes the conversion of dethiobiotin (DTB) to biotin by the insertion of a sulfur atom into dethiobiotin via a radical-based mechanism.</text>
</comment>
<comment type="catalytic activity">
    <reaction evidence="1">
        <text>(4R,5S)-dethiobiotin + (sulfur carrier)-SH + 2 reduced [2Fe-2S]-[ferredoxin] + 2 S-adenosyl-L-methionine = (sulfur carrier)-H + biotin + 2 5'-deoxyadenosine + 2 L-methionine + 2 oxidized [2Fe-2S]-[ferredoxin]</text>
        <dbReference type="Rhea" id="RHEA:22060"/>
        <dbReference type="Rhea" id="RHEA-COMP:10000"/>
        <dbReference type="Rhea" id="RHEA-COMP:10001"/>
        <dbReference type="Rhea" id="RHEA-COMP:14737"/>
        <dbReference type="Rhea" id="RHEA-COMP:14739"/>
        <dbReference type="ChEBI" id="CHEBI:17319"/>
        <dbReference type="ChEBI" id="CHEBI:29917"/>
        <dbReference type="ChEBI" id="CHEBI:33737"/>
        <dbReference type="ChEBI" id="CHEBI:33738"/>
        <dbReference type="ChEBI" id="CHEBI:57586"/>
        <dbReference type="ChEBI" id="CHEBI:57844"/>
        <dbReference type="ChEBI" id="CHEBI:59789"/>
        <dbReference type="ChEBI" id="CHEBI:64428"/>
        <dbReference type="ChEBI" id="CHEBI:149473"/>
        <dbReference type="EC" id="2.8.1.6"/>
    </reaction>
</comment>
<comment type="cofactor">
    <cofactor evidence="1">
        <name>[4Fe-4S] cluster</name>
        <dbReference type="ChEBI" id="CHEBI:49883"/>
    </cofactor>
    <text evidence="1">Binds 1 [4Fe-4S] cluster. The cluster is coordinated with 3 cysteines and an exchangeable S-adenosyl-L-methionine.</text>
</comment>
<comment type="cofactor">
    <cofactor evidence="1">
        <name>[2Fe-2S] cluster</name>
        <dbReference type="ChEBI" id="CHEBI:190135"/>
    </cofactor>
    <text evidence="1">Binds 1 [2Fe-2S] cluster. The cluster is coordinated with 3 cysteines and 1 arginine.</text>
</comment>
<comment type="pathway">
    <text evidence="1">Cofactor biosynthesis; biotin biosynthesis; biotin from 7,8-diaminononanoate: step 2/2.</text>
</comment>
<comment type="subunit">
    <text evidence="1">Homodimer.</text>
</comment>
<comment type="similarity">
    <text evidence="1">Belongs to the radical SAM superfamily. Biotin synthase family.</text>
</comment>
<gene>
    <name evidence="1" type="primary">bioB</name>
    <name type="ordered locus">Shew_1719</name>
</gene>
<dbReference type="EC" id="2.8.1.6" evidence="1"/>
<dbReference type="EMBL" id="CP000606">
    <property type="protein sequence ID" value="ABO23586.1"/>
    <property type="molecule type" value="Genomic_DNA"/>
</dbReference>
<dbReference type="RefSeq" id="WP_011865518.1">
    <property type="nucleotide sequence ID" value="NC_009092.1"/>
</dbReference>
<dbReference type="SMR" id="A3QDN8"/>
<dbReference type="STRING" id="323850.Shew_1719"/>
<dbReference type="KEGG" id="slo:Shew_1719"/>
<dbReference type="eggNOG" id="COG0502">
    <property type="taxonomic scope" value="Bacteria"/>
</dbReference>
<dbReference type="HOGENOM" id="CLU_033172_1_2_6"/>
<dbReference type="OrthoDB" id="9786826at2"/>
<dbReference type="UniPathway" id="UPA00078">
    <property type="reaction ID" value="UER00162"/>
</dbReference>
<dbReference type="Proteomes" id="UP000001558">
    <property type="component" value="Chromosome"/>
</dbReference>
<dbReference type="GO" id="GO:0051537">
    <property type="term" value="F:2 iron, 2 sulfur cluster binding"/>
    <property type="evidence" value="ECO:0007669"/>
    <property type="project" value="UniProtKB-KW"/>
</dbReference>
<dbReference type="GO" id="GO:0051539">
    <property type="term" value="F:4 iron, 4 sulfur cluster binding"/>
    <property type="evidence" value="ECO:0007669"/>
    <property type="project" value="UniProtKB-KW"/>
</dbReference>
<dbReference type="GO" id="GO:0004076">
    <property type="term" value="F:biotin synthase activity"/>
    <property type="evidence" value="ECO:0007669"/>
    <property type="project" value="UniProtKB-UniRule"/>
</dbReference>
<dbReference type="GO" id="GO:0005506">
    <property type="term" value="F:iron ion binding"/>
    <property type="evidence" value="ECO:0007669"/>
    <property type="project" value="UniProtKB-UniRule"/>
</dbReference>
<dbReference type="GO" id="GO:0009102">
    <property type="term" value="P:biotin biosynthetic process"/>
    <property type="evidence" value="ECO:0007669"/>
    <property type="project" value="UniProtKB-UniRule"/>
</dbReference>
<dbReference type="CDD" id="cd01335">
    <property type="entry name" value="Radical_SAM"/>
    <property type="match status" value="1"/>
</dbReference>
<dbReference type="FunFam" id="3.20.20.70:FF:000011">
    <property type="entry name" value="Biotin synthase"/>
    <property type="match status" value="1"/>
</dbReference>
<dbReference type="Gene3D" id="3.20.20.70">
    <property type="entry name" value="Aldolase class I"/>
    <property type="match status" value="1"/>
</dbReference>
<dbReference type="HAMAP" id="MF_01694">
    <property type="entry name" value="BioB"/>
    <property type="match status" value="1"/>
</dbReference>
<dbReference type="InterPro" id="IPR013785">
    <property type="entry name" value="Aldolase_TIM"/>
</dbReference>
<dbReference type="InterPro" id="IPR010722">
    <property type="entry name" value="BATS_dom"/>
</dbReference>
<dbReference type="InterPro" id="IPR002684">
    <property type="entry name" value="Biotin_synth/BioAB"/>
</dbReference>
<dbReference type="InterPro" id="IPR024177">
    <property type="entry name" value="Biotin_synthase"/>
</dbReference>
<dbReference type="InterPro" id="IPR006638">
    <property type="entry name" value="Elp3/MiaA/NifB-like_rSAM"/>
</dbReference>
<dbReference type="InterPro" id="IPR007197">
    <property type="entry name" value="rSAM"/>
</dbReference>
<dbReference type="NCBIfam" id="TIGR00433">
    <property type="entry name" value="bioB"/>
    <property type="match status" value="1"/>
</dbReference>
<dbReference type="PANTHER" id="PTHR22976">
    <property type="entry name" value="BIOTIN SYNTHASE"/>
    <property type="match status" value="1"/>
</dbReference>
<dbReference type="PANTHER" id="PTHR22976:SF2">
    <property type="entry name" value="BIOTIN SYNTHASE, MITOCHONDRIAL"/>
    <property type="match status" value="1"/>
</dbReference>
<dbReference type="Pfam" id="PF06968">
    <property type="entry name" value="BATS"/>
    <property type="match status" value="1"/>
</dbReference>
<dbReference type="Pfam" id="PF04055">
    <property type="entry name" value="Radical_SAM"/>
    <property type="match status" value="1"/>
</dbReference>
<dbReference type="PIRSF" id="PIRSF001619">
    <property type="entry name" value="Biotin_synth"/>
    <property type="match status" value="1"/>
</dbReference>
<dbReference type="SFLD" id="SFLDF00272">
    <property type="entry name" value="biotin_synthase"/>
    <property type="match status" value="1"/>
</dbReference>
<dbReference type="SFLD" id="SFLDG01278">
    <property type="entry name" value="biotin_synthase_like"/>
    <property type="match status" value="1"/>
</dbReference>
<dbReference type="SMART" id="SM00876">
    <property type="entry name" value="BATS"/>
    <property type="match status" value="1"/>
</dbReference>
<dbReference type="SMART" id="SM00729">
    <property type="entry name" value="Elp3"/>
    <property type="match status" value="1"/>
</dbReference>
<dbReference type="SUPFAM" id="SSF102114">
    <property type="entry name" value="Radical SAM enzymes"/>
    <property type="match status" value="1"/>
</dbReference>
<dbReference type="PROSITE" id="PS51918">
    <property type="entry name" value="RADICAL_SAM"/>
    <property type="match status" value="1"/>
</dbReference>
<accession>A3QDN8</accession>
<evidence type="ECO:0000255" key="1">
    <source>
        <dbReference type="HAMAP-Rule" id="MF_01694"/>
    </source>
</evidence>
<evidence type="ECO:0000255" key="2">
    <source>
        <dbReference type="PROSITE-ProRule" id="PRU01266"/>
    </source>
</evidence>
<protein>
    <recommendedName>
        <fullName evidence="1">Biotin synthase</fullName>
        <ecNumber evidence="1">2.8.1.6</ecNumber>
    </recommendedName>
</protein>
<reference key="1">
    <citation type="submission" date="2007-03" db="EMBL/GenBank/DDBJ databases">
        <title>Complete sequence of Shewanella loihica PV-4.</title>
        <authorList>
            <consortium name="US DOE Joint Genome Institute"/>
            <person name="Copeland A."/>
            <person name="Lucas S."/>
            <person name="Lapidus A."/>
            <person name="Barry K."/>
            <person name="Detter J.C."/>
            <person name="Glavina del Rio T."/>
            <person name="Hammon N."/>
            <person name="Israni S."/>
            <person name="Dalin E."/>
            <person name="Tice H."/>
            <person name="Pitluck S."/>
            <person name="Chain P."/>
            <person name="Malfatti S."/>
            <person name="Shin M."/>
            <person name="Vergez L."/>
            <person name="Schmutz J."/>
            <person name="Larimer F."/>
            <person name="Land M."/>
            <person name="Hauser L."/>
            <person name="Kyrpides N."/>
            <person name="Mikhailova N."/>
            <person name="Romine M.F."/>
            <person name="Serres G."/>
            <person name="Fredrickson J."/>
            <person name="Tiedje J."/>
            <person name="Richardson P."/>
        </authorList>
    </citation>
    <scope>NUCLEOTIDE SEQUENCE [LARGE SCALE GENOMIC DNA]</scope>
    <source>
        <strain>ATCC BAA-1088 / PV-4</strain>
    </source>
</reference>
<keyword id="KW-0001">2Fe-2S</keyword>
<keyword id="KW-0004">4Fe-4S</keyword>
<keyword id="KW-0093">Biotin biosynthesis</keyword>
<keyword id="KW-0408">Iron</keyword>
<keyword id="KW-0411">Iron-sulfur</keyword>
<keyword id="KW-0479">Metal-binding</keyword>
<keyword id="KW-1185">Reference proteome</keyword>
<keyword id="KW-0949">S-adenosyl-L-methionine</keyword>
<keyword id="KW-0808">Transferase</keyword>
<name>BIOB_SHELP</name>
<feature type="chain" id="PRO_0000381620" description="Biotin synthase">
    <location>
        <begin position="1"/>
        <end position="350"/>
    </location>
</feature>
<feature type="domain" description="Radical SAM core" evidence="2">
    <location>
        <begin position="41"/>
        <end position="265"/>
    </location>
</feature>
<feature type="binding site" evidence="1">
    <location>
        <position position="56"/>
    </location>
    <ligand>
        <name>[4Fe-4S] cluster</name>
        <dbReference type="ChEBI" id="CHEBI:49883"/>
        <note>4Fe-4S-S-AdoMet</note>
    </ligand>
</feature>
<feature type="binding site" evidence="1">
    <location>
        <position position="60"/>
    </location>
    <ligand>
        <name>[4Fe-4S] cluster</name>
        <dbReference type="ChEBI" id="CHEBI:49883"/>
        <note>4Fe-4S-S-AdoMet</note>
    </ligand>
</feature>
<feature type="binding site" evidence="1">
    <location>
        <position position="63"/>
    </location>
    <ligand>
        <name>[4Fe-4S] cluster</name>
        <dbReference type="ChEBI" id="CHEBI:49883"/>
        <note>4Fe-4S-S-AdoMet</note>
    </ligand>
</feature>
<feature type="binding site" evidence="1">
    <location>
        <position position="100"/>
    </location>
    <ligand>
        <name>[2Fe-2S] cluster</name>
        <dbReference type="ChEBI" id="CHEBI:190135"/>
    </ligand>
</feature>
<feature type="binding site" evidence="1">
    <location>
        <position position="131"/>
    </location>
    <ligand>
        <name>[2Fe-2S] cluster</name>
        <dbReference type="ChEBI" id="CHEBI:190135"/>
    </ligand>
</feature>
<feature type="binding site" evidence="1">
    <location>
        <position position="191"/>
    </location>
    <ligand>
        <name>[2Fe-2S] cluster</name>
        <dbReference type="ChEBI" id="CHEBI:190135"/>
    </ligand>
</feature>
<feature type="binding site" evidence="1">
    <location>
        <position position="263"/>
    </location>
    <ligand>
        <name>[2Fe-2S] cluster</name>
        <dbReference type="ChEBI" id="CHEBI:190135"/>
    </ligand>
</feature>
<proteinExistence type="inferred from homology"/>
<organism>
    <name type="scientific">Shewanella loihica (strain ATCC BAA-1088 / PV-4)</name>
    <dbReference type="NCBI Taxonomy" id="323850"/>
    <lineage>
        <taxon>Bacteria</taxon>
        <taxon>Pseudomonadati</taxon>
        <taxon>Pseudomonadota</taxon>
        <taxon>Gammaproteobacteria</taxon>
        <taxon>Alteromonadales</taxon>
        <taxon>Shewanellaceae</taxon>
        <taxon>Shewanella</taxon>
    </lineage>
</organism>